<reference key="1">
    <citation type="submission" date="2004-11" db="EMBL/GenBank/DDBJ databases">
        <authorList>
            <consortium name="The German cDNA consortium"/>
        </authorList>
    </citation>
    <scope>NUCLEOTIDE SEQUENCE [LARGE SCALE MRNA]</scope>
    <source>
        <tissue>Brain cortex</tissue>
    </source>
</reference>
<protein>
    <recommendedName>
        <fullName evidence="6">Endoplasmic reticulum membrane sensor NFE2L1</fullName>
    </recommendedName>
    <alternativeName>
        <fullName evidence="1">Nuclear factor erythroid 2-related factor 1</fullName>
        <shortName evidence="1">NF-E2-related factor 1</shortName>
        <shortName evidence="1">NFE2-related factor 1</shortName>
    </alternativeName>
    <alternativeName>
        <fullName evidence="1">Nuclear factor, erythroid derived 2, like 1</fullName>
    </alternativeName>
    <component>
        <recommendedName>
            <fullName evidence="1">Transcription factor NRF1</fullName>
        </recommendedName>
    </component>
</protein>
<gene>
    <name evidence="1" type="primary">NFE2L1</name>
    <name evidence="1" type="synonym">NRF1</name>
</gene>
<evidence type="ECO:0000250" key="1">
    <source>
        <dbReference type="UniProtKB" id="Q14494"/>
    </source>
</evidence>
<evidence type="ECO:0000250" key="2">
    <source>
        <dbReference type="UniProtKB" id="Q61985"/>
    </source>
</evidence>
<evidence type="ECO:0000255" key="3"/>
<evidence type="ECO:0000255" key="4">
    <source>
        <dbReference type="PROSITE-ProRule" id="PRU00978"/>
    </source>
</evidence>
<evidence type="ECO:0000256" key="5">
    <source>
        <dbReference type="SAM" id="MobiDB-lite"/>
    </source>
</evidence>
<evidence type="ECO:0000305" key="6"/>
<proteinExistence type="evidence at transcript level"/>
<name>NF2L1_PONAB</name>
<sequence>MLSLKKYLTEGLLQFTILLSLIGVRVDVDTYLTSQLPPLREIILGPSSAYTQTQFHNLRNTLDGYGIHPKSIDLDNYFTARRLLSQVRALDRFQVPTTEVNAWLVHRDPEGSVSGSQPNSGLALESSSGLQDVTGPDNGVRESETEQGFGEDLEDLGAVAPPVSGDLTKEDIDLIDILWRQDIDLGAGREVFDYSHRQKEQDVEKELRDGGEQDTWAGEGAEALARNLLVDGETGESFPAQVPSGEDQTALSLEECLRLLEATCPFGENAEFPADISSITEAVPSESEPPALQNNLLSPLLAGTESPFDLEQQWQDLMSIMEMQAMEVNTSASEILYSAPPGDPLSTNYSLAPNTPINQNVSPHQASLGGCSQDFLLFSPEVESLPVASSSTLLPLAPSNSTSLNSTFGSTNLTGLFFPPQLNGTANDTAGPELPDPLGGLLDEAMLDEISLMDLAIEEGFNPVQASQLEEEFDSDSGLSLDSSHSPSSLSSSEGSSSSSSSSSSSSSSASSSASSSFSEEGAVGYSSDSETLDLEEAEGAVGYQPEYSKFCRMSYQDPAQLSCLPYLEHVGHNHTYNMAPSALDSADLPPPSALKKGSKEKLADFLDKQMSRDEHRARAMKIPFTNDKIINLPVEEFNELLSKYQLSEAQLSLIRDIRRRGKNKMAAQNCRKRKLDTILNLERDVEDLQRDKARLLREKVEFLRSLRQMKQKVQSLYQEVFGRLRDENGRPYSPSQYALQYAGDGSVLLIPRTMADQQARRQERKPKDRRK</sequence>
<dbReference type="EMBL" id="CR859198">
    <property type="protein sequence ID" value="CAH91385.1"/>
    <property type="molecule type" value="mRNA"/>
</dbReference>
<dbReference type="RefSeq" id="NP_001125819.1">
    <property type="nucleotide sequence ID" value="NM_001132347.1"/>
</dbReference>
<dbReference type="SMR" id="Q5RA25"/>
<dbReference type="FunCoup" id="Q5RA25">
    <property type="interactions" value="4862"/>
</dbReference>
<dbReference type="STRING" id="9601.ENSPPYP00000009969"/>
<dbReference type="GlyCosmos" id="Q5RA25">
    <property type="glycosylation" value="3 sites, No reported glycans"/>
</dbReference>
<dbReference type="GeneID" id="100172747"/>
<dbReference type="KEGG" id="pon:100172747"/>
<dbReference type="CTD" id="4779"/>
<dbReference type="eggNOG" id="KOG3863">
    <property type="taxonomic scope" value="Eukaryota"/>
</dbReference>
<dbReference type="InParanoid" id="Q5RA25"/>
<dbReference type="OrthoDB" id="7458135at2759"/>
<dbReference type="Proteomes" id="UP000001595">
    <property type="component" value="Unplaced"/>
</dbReference>
<dbReference type="GO" id="GO:0005789">
    <property type="term" value="C:endoplasmic reticulum membrane"/>
    <property type="evidence" value="ECO:0007669"/>
    <property type="project" value="UniProtKB-SubCell"/>
</dbReference>
<dbReference type="GO" id="GO:0005634">
    <property type="term" value="C:nucleus"/>
    <property type="evidence" value="ECO:0007669"/>
    <property type="project" value="UniProtKB-SubCell"/>
</dbReference>
<dbReference type="GO" id="GO:0000981">
    <property type="term" value="F:DNA-binding transcription factor activity, RNA polymerase II-specific"/>
    <property type="evidence" value="ECO:0007669"/>
    <property type="project" value="TreeGrafter"/>
</dbReference>
<dbReference type="GO" id="GO:0008289">
    <property type="term" value="F:lipid binding"/>
    <property type="evidence" value="ECO:0007669"/>
    <property type="project" value="UniProtKB-KW"/>
</dbReference>
<dbReference type="GO" id="GO:0000978">
    <property type="term" value="F:RNA polymerase II cis-regulatory region sequence-specific DNA binding"/>
    <property type="evidence" value="ECO:0007669"/>
    <property type="project" value="InterPro"/>
</dbReference>
<dbReference type="GO" id="GO:0008203">
    <property type="term" value="P:cholesterol metabolic process"/>
    <property type="evidence" value="ECO:0007669"/>
    <property type="project" value="UniProtKB-KW"/>
</dbReference>
<dbReference type="CDD" id="cd14720">
    <property type="entry name" value="bZIP_NFE2-like"/>
    <property type="match status" value="1"/>
</dbReference>
<dbReference type="FunFam" id="1.10.880.10:FF:000001">
    <property type="entry name" value="Nuclear factor erythroid 2-related factor 2"/>
    <property type="match status" value="1"/>
</dbReference>
<dbReference type="Gene3D" id="1.10.880.10">
    <property type="entry name" value="Transcription factor, Skn-1-like, DNA-binding domain"/>
    <property type="match status" value="1"/>
</dbReference>
<dbReference type="InterPro" id="IPR004827">
    <property type="entry name" value="bZIP"/>
</dbReference>
<dbReference type="InterPro" id="IPR004826">
    <property type="entry name" value="bZIP_Maf"/>
</dbReference>
<dbReference type="InterPro" id="IPR047167">
    <property type="entry name" value="NFE2-like"/>
</dbReference>
<dbReference type="InterPro" id="IPR008917">
    <property type="entry name" value="TF_DNA-bd_sf"/>
</dbReference>
<dbReference type="PANTHER" id="PTHR24411:SF31">
    <property type="entry name" value="ENDOPLASMIC RETICULUM MEMBRANE SENSOR NFE2L1"/>
    <property type="match status" value="1"/>
</dbReference>
<dbReference type="PANTHER" id="PTHR24411">
    <property type="entry name" value="NUCLEAR FACTOR ERYTHROID 2-RELATED FACTOR"/>
    <property type="match status" value="1"/>
</dbReference>
<dbReference type="Pfam" id="PF03131">
    <property type="entry name" value="bZIP_Maf"/>
    <property type="match status" value="1"/>
</dbReference>
<dbReference type="SMART" id="SM00338">
    <property type="entry name" value="BRLZ"/>
    <property type="match status" value="1"/>
</dbReference>
<dbReference type="SUPFAM" id="SSF47454">
    <property type="entry name" value="A DNA-binding domain in eukaryotic transcription factors"/>
    <property type="match status" value="1"/>
</dbReference>
<dbReference type="PROSITE" id="PS50217">
    <property type="entry name" value="BZIP"/>
    <property type="match status" value="1"/>
</dbReference>
<dbReference type="PROSITE" id="PS00036">
    <property type="entry name" value="BZIP_BASIC"/>
    <property type="match status" value="1"/>
</dbReference>
<feature type="chain" id="PRO_0000341947" description="Endoplasmic reticulum membrane sensor NFE2L1">
    <location>
        <begin position="1"/>
        <end position="772"/>
    </location>
</feature>
<feature type="chain" id="PRO_0000443105" description="Transcription factor NRF1" evidence="1">
    <location>
        <begin position="104"/>
        <end position="772"/>
    </location>
</feature>
<feature type="transmembrane region" description="Helical; Signal-anchor for type II membrane protein" evidence="3">
    <location>
        <begin position="7"/>
        <end position="24"/>
    </location>
</feature>
<feature type="domain" description="bZIP" evidence="4">
    <location>
        <begin position="654"/>
        <end position="717"/>
    </location>
</feature>
<feature type="region of interest" description="Disordered" evidence="5">
    <location>
        <begin position="108"/>
        <end position="148"/>
    </location>
</feature>
<feature type="region of interest" description="Cholesterol recognition/amino acid consensus (CRAC) region" evidence="2">
    <location>
        <begin position="191"/>
        <end position="199"/>
    </location>
</feature>
<feature type="region of interest" description="CPD" evidence="2">
    <location>
        <begin position="379"/>
        <end position="383"/>
    </location>
</feature>
<feature type="region of interest" description="Disordered" evidence="5">
    <location>
        <begin position="470"/>
        <end position="532"/>
    </location>
</feature>
<feature type="region of interest" description="Basic motif" evidence="4">
    <location>
        <begin position="656"/>
        <end position="675"/>
    </location>
</feature>
<feature type="region of interest" description="Leucine-zipper" evidence="4">
    <location>
        <begin position="682"/>
        <end position="696"/>
    </location>
</feature>
<feature type="region of interest" description="Disordered" evidence="5">
    <location>
        <begin position="753"/>
        <end position="772"/>
    </location>
</feature>
<feature type="short sequence motif" description="Destruction motif" evidence="2">
    <location>
        <begin position="476"/>
        <end position="480"/>
    </location>
</feature>
<feature type="short sequence motif" description="Nuclear localization signal" evidence="3">
    <location>
        <begin position="761"/>
        <end position="768"/>
    </location>
</feature>
<feature type="compositionally biased region" description="Polar residues" evidence="5">
    <location>
        <begin position="113"/>
        <end position="131"/>
    </location>
</feature>
<feature type="compositionally biased region" description="Low complexity" evidence="5">
    <location>
        <begin position="476"/>
        <end position="523"/>
    </location>
</feature>
<feature type="compositionally biased region" description="Basic residues" evidence="5">
    <location>
        <begin position="763"/>
        <end position="772"/>
    </location>
</feature>
<feature type="site" description="Cleavage; by DDI2" evidence="1">
    <location>
        <begin position="103"/>
        <end position="104"/>
    </location>
</feature>
<feature type="modified residue" description="Phosphoserine; by CK2" evidence="2">
    <location>
        <position position="528"/>
    </location>
</feature>
<feature type="modified residue" description="Phosphoserine; by PKA" evidence="1">
    <location>
        <position position="599"/>
    </location>
</feature>
<feature type="glycosylation site" description="N-linked (GlcNAc...) asparagine" evidence="3">
    <location>
        <position position="348"/>
    </location>
</feature>
<feature type="glycosylation site" description="N-linked (GlcNAc...) asparagine" evidence="3">
    <location>
        <position position="412"/>
    </location>
</feature>
<feature type="glycosylation site" description="N-linked (GlcNAc...) asparagine" evidence="3">
    <location>
        <position position="423"/>
    </location>
</feature>
<accession>Q5RA25</accession>
<comment type="function">
    <molecule>Endoplasmic reticulum membrane sensor NFE2L1</molecule>
    <text evidence="1 2">Endoplasmic reticulum membrane sensor that translocates into the nucleus in response to various stresses to act as a transcription factor (By similarity). Constitutes a precursor of the transcription factor NRF1 (By similarity). Able to detect various cellular stresses, such as cholesterol excess, oxidative stress or proteasome inhibition (By similarity). In response to stress, it is released from the endoplasmic reticulum membrane following cleavage by the protease DDI2 and translocates into the nucleus to form the transcription factor NRF1 (By similarity). Acts as a key sensor of cholesterol excess: in excess cholesterol conditions, the endoplasmic reticulum membrane form of the protein directly binds cholesterol via its CRAC motif, preventing cleavage and release of the transcription factor NRF1, thereby allowing expression of genes promoting cholesterol removal, such as CD36 (By similarity). Involved in proteasome homeostasis: in response to proteasome inhibition, it is released from the endoplasmic reticulum membrane, translocates to the nucleus and activates expression of genes encoding proteasome subunits (By similarity).</text>
</comment>
<comment type="function">
    <molecule>Transcription factor NRF1</molecule>
    <text evidence="1 2">CNC-type bZIP family transcription factor that translocates to the nucleus and regulates expression of target genes in response to various stresses. Heterodimerizes with small-Maf proteins (MAFF, MAFG or MAFK) and binds DNA motifs including the antioxidant response elements (AREs), which regulate expression of genes involved in oxidative stress response. Activates or represses expression of target genes, depending on the context (By similarity). Plays a key role in cholesterol homeostasis by acting as a sensor of cholesterol excess: in low cholesterol conditions, translocates into the nucleus and represses expression of genes involved in defense against cholesterol excess, such as CD36 (By similarity). In excess cholesterol conditions, the endoplasmic reticulum membrane form of the protein directly binds cholesterol via its CRAC motif, preventing cleavage and release of the transcription factor NRF1, thereby allowing expression of genes promoting cholesterol removal (By similarity). Critical for redox balance in response to oxidative stress: acts by binding the AREs motifs on promoters and mediating activation of oxidative stress response genes, such as GCLC, GCLM, GSS, MT1 and MT2 (By similarity). Plays an essential role during fetal liver hematopoiesis: probably has a protective function against oxidative stress and is involved in lipid homeostasis in the liver (By similarity). Involved in proteasome homeostasis: in response to proteasome inhibition, mediates the 'bounce-back' of proteasome subunits by translocating into the nucleus and activating expression of genes encoding proteasome subunits (By similarity). Also involved in regulating glucose flux (By similarity). Together with CEBPB; represses expression of DSPP during odontoblast differentiation. In response to ascorbic acid induction, activates expression of SP7/Osterix in osteoblasts (By similarity).</text>
</comment>
<comment type="subunit">
    <text evidence="1">Interacts with KEAP1.</text>
</comment>
<comment type="subunit">
    <molecule>Endoplasmic reticulum membrane sensor NFE2L1</molecule>
    <text evidence="1 2">Interacts (via CPD region) with FBXW7; leading to its ubiquitination and degradation. Interacts with SYVN1/HRD1; leading to its ubiquitination and degradation. Interacts (when ubiquitinated) with DDI2; leading to its cleavage.</text>
</comment>
<comment type="subunit">
    <molecule>Transcription factor NRF1</molecule>
    <text evidence="1 2">Interacts (via the bZIP domain) with small MAF protein (MAFF, MAFG or MAFK); required for binding to antioxidant response elements (AREs) on DNA. Interacts (via Destruction motif) with BTRC; leading to its ubiquitination and degradation. Interacts with CEBPB; the heterodimer represses expression of DSPP during odontoblast differentiation. Interacts with MOTS-c, a peptide produced by the mitochondrially encoded 12S rRNA MT-RNR1.</text>
</comment>
<comment type="subcellular location">
    <molecule>Endoplasmic reticulum membrane sensor NFE2L1</molecule>
    <subcellularLocation>
        <location evidence="1">Endoplasmic reticulum membrane</location>
        <topology evidence="1">Single-pass type II membrane protein</topology>
    </subcellularLocation>
    <subcellularLocation>
        <location evidence="1">Endoplasmic reticulum membrane</location>
        <topology evidence="1">Single-pass type III membrane protein</topology>
    </subcellularLocation>
    <text evidence="1">In normal conditions, probably has a single-pass type II membrane protein topology, with the DNA-binding domain facing the endoplasmic reticulum lumen. Following cellular stress, it is rapidly and efficiently retrotranslocated to the cytosolic side of the membrane, a process dependent on p97/VCP, to have a single-pass type III membrane protein topology with the major part of the protein facing the cytosol. Retrotranslocated proteins are normally rapidly degraded by the proteasome and active species do not accumulate. However, retrotranslocated protein NFE2L1 escapes degradation and is cleaved at Leu-104 by DDI2, releasing the protein from the endoplasmic reticulum membrane and forming the transcription factor NRF1 that translocates into the nucleus.</text>
</comment>
<comment type="subcellular location">
    <molecule>Transcription factor NRF1</molecule>
    <subcellularLocation>
        <location evidence="1 4">Nucleus</location>
    </subcellularLocation>
    <text evidence="1">Translocates into the nucleus following cleavage of Endoplasmic reticulum membrane sensor NFE2L1 by aspartyl protease DDI2.</text>
</comment>
<comment type="domain">
    <text evidence="2">The cholesterol recognition/amino acid consensus (CRAC) region directly binds cholesterol, as well as campesterol and 27-hydroxycholesterol. Has much lower affinity for epicholesterol.</text>
</comment>
<comment type="PTM">
    <molecule>Endoplasmic reticulum membrane sensor NFE2L1</molecule>
    <text evidence="1">Cleaved at Leu-104 by the aspartyl protease DDI2 following retrotranslocation, releasing the protein from the endoplasmic reticulum membrane and forming the transcription factor NRF1 that translocates into the nucleus. Ubiquitination is prerequisite for cleavage by aspartyl protease DDI2.</text>
</comment>
<comment type="PTM">
    <molecule>Endoplasmic reticulum membrane sensor NFE2L1</molecule>
    <text evidence="1 2">N-glycosylated in normal conditions, when it has a single-pass type II membrane protein topology, with the DNA-binding domain facing the endoplasmic reticulum lumen (By similarity). Deglycosylated during retrotranslocation to the cytosolic side of the membrane, to have a single-pass type III membrane protein topology with the major part of the protein facing the cytosol (By similarity).</text>
</comment>
<comment type="PTM">
    <molecule>Endoplasmic reticulum membrane sensor NFE2L1</molecule>
    <text evidence="1 2">Ubiquitinated by the SCF(FBXW7) complex and SYVN1/HRD1, leading to its degradation by the proteasome (By similarity). Ubiquitinated during retrotranslocation to the cytosolic side of the membrane: ubiquitination does not lead to degradation and is required for processing by the aspartyl protease DDI2 and subsequent release from the endoplasmic reticulum membrane (By similarity).</text>
</comment>
<comment type="PTM">
    <molecule>Transcription factor NRF1</molecule>
    <text evidence="1 2">Phosphorylation by CK2 at Ser-528 inhibits transcription factor activity, possibly by affecting DNA-binding activity (By similarity). Phosphorylation at Ser-599 is required for interaction with CEBPB (By similarity).</text>
</comment>
<comment type="PTM">
    <molecule>Transcription factor NRF1</molecule>
    <text evidence="2">Ubiquitinated by the SCF(BTRC) complex in the nucleus, leading to its degradation by the proteasome.</text>
</comment>
<comment type="similarity">
    <text evidence="6">Belongs to the bZIP family. CNC subfamily.</text>
</comment>
<organism>
    <name type="scientific">Pongo abelii</name>
    <name type="common">Sumatran orangutan</name>
    <name type="synonym">Pongo pygmaeus abelii</name>
    <dbReference type="NCBI Taxonomy" id="9601"/>
    <lineage>
        <taxon>Eukaryota</taxon>
        <taxon>Metazoa</taxon>
        <taxon>Chordata</taxon>
        <taxon>Craniata</taxon>
        <taxon>Vertebrata</taxon>
        <taxon>Euteleostomi</taxon>
        <taxon>Mammalia</taxon>
        <taxon>Eutheria</taxon>
        <taxon>Euarchontoglires</taxon>
        <taxon>Primates</taxon>
        <taxon>Haplorrhini</taxon>
        <taxon>Catarrhini</taxon>
        <taxon>Hominidae</taxon>
        <taxon>Pongo</taxon>
    </lineage>
</organism>
<keyword id="KW-0010">Activator</keyword>
<keyword id="KW-0153">Cholesterol metabolism</keyword>
<keyword id="KW-0238">DNA-binding</keyword>
<keyword id="KW-0256">Endoplasmic reticulum</keyword>
<keyword id="KW-0325">Glycoprotein</keyword>
<keyword id="KW-0443">Lipid metabolism</keyword>
<keyword id="KW-0446">Lipid-binding</keyword>
<keyword id="KW-0472">Membrane</keyword>
<keyword id="KW-0539">Nucleus</keyword>
<keyword id="KW-0597">Phosphoprotein</keyword>
<keyword id="KW-1185">Reference proteome</keyword>
<keyword id="KW-0678">Repressor</keyword>
<keyword id="KW-0735">Signal-anchor</keyword>
<keyword id="KW-0753">Steroid metabolism</keyword>
<keyword id="KW-1207">Sterol metabolism</keyword>
<keyword id="KW-0804">Transcription</keyword>
<keyword id="KW-0805">Transcription regulation</keyword>
<keyword id="KW-0812">Transmembrane</keyword>
<keyword id="KW-1133">Transmembrane helix</keyword>
<keyword id="KW-0832">Ubl conjugation</keyword>